<proteinExistence type="inferred from homology"/>
<reference key="1">
    <citation type="journal article" date="2007" name="Nat. Biotechnol.">
        <title>Comparative analysis of the complete genome sequence of the plant growth-promoting bacterium Bacillus amyloliquefaciens FZB42.</title>
        <authorList>
            <person name="Chen X.H."/>
            <person name="Koumoutsi A."/>
            <person name="Scholz R."/>
            <person name="Eisenreich A."/>
            <person name="Schneider K."/>
            <person name="Heinemeyer I."/>
            <person name="Morgenstern B."/>
            <person name="Voss B."/>
            <person name="Hess W.R."/>
            <person name="Reva O."/>
            <person name="Junge H."/>
            <person name="Voigt B."/>
            <person name="Jungblut P.R."/>
            <person name="Vater J."/>
            <person name="Suessmuth R."/>
            <person name="Liesegang H."/>
            <person name="Strittmatter A."/>
            <person name="Gottschalk G."/>
            <person name="Borriss R."/>
        </authorList>
    </citation>
    <scope>NUCLEOTIDE SEQUENCE [LARGE SCALE GENOMIC DNA]</scope>
    <source>
        <strain>DSM 23117 / BGSC 10A6 / LMG 26770 / FZB42</strain>
    </source>
</reference>
<accession>A7Z152</accession>
<dbReference type="EC" id="1.1.1.27" evidence="1"/>
<dbReference type="EMBL" id="CP000560">
    <property type="protein sequence ID" value="ABS72728.1"/>
    <property type="molecule type" value="Genomic_DNA"/>
</dbReference>
<dbReference type="RefSeq" id="WP_011996292.1">
    <property type="nucleotide sequence ID" value="NC_009725.2"/>
</dbReference>
<dbReference type="SMR" id="A7Z152"/>
<dbReference type="GeneID" id="93079467"/>
<dbReference type="KEGG" id="bay:RBAM_003290"/>
<dbReference type="HOGENOM" id="CLU_045401_1_1_9"/>
<dbReference type="UniPathway" id="UPA00554">
    <property type="reaction ID" value="UER00611"/>
</dbReference>
<dbReference type="Proteomes" id="UP000001120">
    <property type="component" value="Chromosome"/>
</dbReference>
<dbReference type="GO" id="GO:0005737">
    <property type="term" value="C:cytoplasm"/>
    <property type="evidence" value="ECO:0007669"/>
    <property type="project" value="UniProtKB-SubCell"/>
</dbReference>
<dbReference type="GO" id="GO:0004459">
    <property type="term" value="F:L-lactate dehydrogenase activity"/>
    <property type="evidence" value="ECO:0007669"/>
    <property type="project" value="UniProtKB-UniRule"/>
</dbReference>
<dbReference type="GO" id="GO:0006096">
    <property type="term" value="P:glycolytic process"/>
    <property type="evidence" value="ECO:0007669"/>
    <property type="project" value="UniProtKB-UniRule"/>
</dbReference>
<dbReference type="GO" id="GO:0006089">
    <property type="term" value="P:lactate metabolic process"/>
    <property type="evidence" value="ECO:0007669"/>
    <property type="project" value="TreeGrafter"/>
</dbReference>
<dbReference type="CDD" id="cd05291">
    <property type="entry name" value="HicDH_like"/>
    <property type="match status" value="1"/>
</dbReference>
<dbReference type="FunFam" id="3.40.50.720:FF:000018">
    <property type="entry name" value="Malate dehydrogenase"/>
    <property type="match status" value="1"/>
</dbReference>
<dbReference type="Gene3D" id="3.90.110.10">
    <property type="entry name" value="Lactate dehydrogenase/glycoside hydrolase, family 4, C-terminal"/>
    <property type="match status" value="1"/>
</dbReference>
<dbReference type="Gene3D" id="3.40.50.720">
    <property type="entry name" value="NAD(P)-binding Rossmann-like Domain"/>
    <property type="match status" value="1"/>
</dbReference>
<dbReference type="HAMAP" id="MF_00488">
    <property type="entry name" value="Lactate_dehydrog"/>
    <property type="match status" value="1"/>
</dbReference>
<dbReference type="InterPro" id="IPR001557">
    <property type="entry name" value="L-lactate/malate_DH"/>
</dbReference>
<dbReference type="InterPro" id="IPR011304">
    <property type="entry name" value="L-lactate_DH"/>
</dbReference>
<dbReference type="InterPro" id="IPR018177">
    <property type="entry name" value="L-lactate_DH_AS"/>
</dbReference>
<dbReference type="InterPro" id="IPR022383">
    <property type="entry name" value="Lactate/malate_DH_C"/>
</dbReference>
<dbReference type="InterPro" id="IPR001236">
    <property type="entry name" value="Lactate/malate_DH_N"/>
</dbReference>
<dbReference type="InterPro" id="IPR015955">
    <property type="entry name" value="Lactate_DH/Glyco_Ohase_4_C"/>
</dbReference>
<dbReference type="InterPro" id="IPR036291">
    <property type="entry name" value="NAD(P)-bd_dom_sf"/>
</dbReference>
<dbReference type="NCBIfam" id="TIGR01771">
    <property type="entry name" value="L-LDH-NAD"/>
    <property type="match status" value="1"/>
</dbReference>
<dbReference type="NCBIfam" id="NF000824">
    <property type="entry name" value="PRK00066.1"/>
    <property type="match status" value="1"/>
</dbReference>
<dbReference type="NCBIfam" id="NF004863">
    <property type="entry name" value="PRK06223.1"/>
    <property type="match status" value="1"/>
</dbReference>
<dbReference type="PANTHER" id="PTHR43128">
    <property type="entry name" value="L-2-HYDROXYCARBOXYLATE DEHYDROGENASE (NAD(P)(+))"/>
    <property type="match status" value="1"/>
</dbReference>
<dbReference type="PANTHER" id="PTHR43128:SF16">
    <property type="entry name" value="L-LACTATE DEHYDROGENASE"/>
    <property type="match status" value="1"/>
</dbReference>
<dbReference type="Pfam" id="PF02866">
    <property type="entry name" value="Ldh_1_C"/>
    <property type="match status" value="1"/>
</dbReference>
<dbReference type="Pfam" id="PF00056">
    <property type="entry name" value="Ldh_1_N"/>
    <property type="match status" value="1"/>
</dbReference>
<dbReference type="PIRSF" id="PIRSF000102">
    <property type="entry name" value="Lac_mal_DH"/>
    <property type="match status" value="1"/>
</dbReference>
<dbReference type="PRINTS" id="PR00086">
    <property type="entry name" value="LLDHDRGNASE"/>
</dbReference>
<dbReference type="SUPFAM" id="SSF56327">
    <property type="entry name" value="LDH C-terminal domain-like"/>
    <property type="match status" value="1"/>
</dbReference>
<dbReference type="SUPFAM" id="SSF51735">
    <property type="entry name" value="NAD(P)-binding Rossmann-fold domains"/>
    <property type="match status" value="1"/>
</dbReference>
<dbReference type="PROSITE" id="PS00064">
    <property type="entry name" value="L_LDH"/>
    <property type="match status" value="1"/>
</dbReference>
<gene>
    <name evidence="1" type="primary">ldh</name>
    <name type="ordered locus">RBAM_003290</name>
</gene>
<protein>
    <recommendedName>
        <fullName evidence="1">L-lactate dehydrogenase</fullName>
        <shortName evidence="1">L-LDH</shortName>
        <ecNumber evidence="1">1.1.1.27</ecNumber>
    </recommendedName>
</protein>
<evidence type="ECO:0000255" key="1">
    <source>
        <dbReference type="HAMAP-Rule" id="MF_00488"/>
    </source>
</evidence>
<sequence>MMNERVNKVALIGAGFVGSSYAFALINQGITDELVIIDVNREKAMGDVMDLNHGKAFAPHPVKTSYGTYEDCKDADIVCICAGANQKPGETRLELVEKNLAIFKSIVGEVMASGFDGIFLVATNPVDILTYATWTFSGLPKERVIGSGTTLDSARFRYMLSEYFGAAPQNVHAHIIGEHGDTELPVWSHANIGGVPVQQLLEKHAAYKQDELDQIVDDVKNAAYHIIEKKGATYYGVAMSLARITKAILRNENSILTVSTYLDGQYGVNDVFIGVPAVVNRNGIAGVTELELNETEQAQFSRSANVLKDILAPHFAE</sequence>
<comment type="function">
    <text evidence="1">Catalyzes the conversion of lactate to pyruvate.</text>
</comment>
<comment type="catalytic activity">
    <reaction evidence="1">
        <text>(S)-lactate + NAD(+) = pyruvate + NADH + H(+)</text>
        <dbReference type="Rhea" id="RHEA:23444"/>
        <dbReference type="ChEBI" id="CHEBI:15361"/>
        <dbReference type="ChEBI" id="CHEBI:15378"/>
        <dbReference type="ChEBI" id="CHEBI:16651"/>
        <dbReference type="ChEBI" id="CHEBI:57540"/>
        <dbReference type="ChEBI" id="CHEBI:57945"/>
        <dbReference type="EC" id="1.1.1.27"/>
    </reaction>
</comment>
<comment type="activity regulation">
    <text evidence="1">Allosterically activated by fructose 1,6-bisphosphate (FBP).</text>
</comment>
<comment type="pathway">
    <text evidence="1">Fermentation; pyruvate fermentation to lactate; (S)-lactate from pyruvate: step 1/1.</text>
</comment>
<comment type="subunit">
    <text evidence="1">Homotetramer.</text>
</comment>
<comment type="subcellular location">
    <subcellularLocation>
        <location evidence="1">Cytoplasm</location>
    </subcellularLocation>
</comment>
<comment type="similarity">
    <text evidence="1">Belongs to the LDH/MDH superfamily. LDH family.</text>
</comment>
<keyword id="KW-0021">Allosteric enzyme</keyword>
<keyword id="KW-0963">Cytoplasm</keyword>
<keyword id="KW-0520">NAD</keyword>
<keyword id="KW-0560">Oxidoreductase</keyword>
<keyword id="KW-0597">Phosphoprotein</keyword>
<feature type="chain" id="PRO_1000026496" description="L-lactate dehydrogenase">
    <location>
        <begin position="1"/>
        <end position="317"/>
    </location>
</feature>
<feature type="active site" description="Proton acceptor" evidence="1">
    <location>
        <position position="179"/>
    </location>
</feature>
<feature type="binding site" evidence="1">
    <location>
        <position position="17"/>
    </location>
    <ligand>
        <name>NAD(+)</name>
        <dbReference type="ChEBI" id="CHEBI:57540"/>
    </ligand>
</feature>
<feature type="binding site" evidence="1">
    <location>
        <position position="38"/>
    </location>
    <ligand>
        <name>NAD(+)</name>
        <dbReference type="ChEBI" id="CHEBI:57540"/>
    </ligand>
</feature>
<feature type="binding site" evidence="1">
    <location>
        <position position="43"/>
    </location>
    <ligand>
        <name>NAD(+)</name>
        <dbReference type="ChEBI" id="CHEBI:57540"/>
    </ligand>
</feature>
<feature type="binding site" evidence="1">
    <location>
        <position position="69"/>
    </location>
    <ligand>
        <name>NAD(+)</name>
        <dbReference type="ChEBI" id="CHEBI:57540"/>
    </ligand>
</feature>
<feature type="binding site" evidence="1">
    <location>
        <begin position="83"/>
        <end position="84"/>
    </location>
    <ligand>
        <name>NAD(+)</name>
        <dbReference type="ChEBI" id="CHEBI:57540"/>
    </ligand>
</feature>
<feature type="binding site" evidence="1">
    <location>
        <position position="86"/>
    </location>
    <ligand>
        <name>substrate</name>
    </ligand>
</feature>
<feature type="binding site" evidence="1">
    <location>
        <position position="92"/>
    </location>
    <ligand>
        <name>substrate</name>
    </ligand>
</feature>
<feature type="binding site" evidence="1">
    <location>
        <position position="105"/>
    </location>
    <ligand>
        <name>NAD(+)</name>
        <dbReference type="ChEBI" id="CHEBI:57540"/>
    </ligand>
</feature>
<feature type="binding site" evidence="1">
    <location>
        <begin position="122"/>
        <end position="124"/>
    </location>
    <ligand>
        <name>NAD(+)</name>
        <dbReference type="ChEBI" id="CHEBI:57540"/>
    </ligand>
</feature>
<feature type="binding site" evidence="1">
    <location>
        <begin position="124"/>
        <end position="127"/>
    </location>
    <ligand>
        <name>substrate</name>
    </ligand>
</feature>
<feature type="binding site" evidence="1">
    <location>
        <position position="147"/>
    </location>
    <ligand>
        <name>NAD(+)</name>
        <dbReference type="ChEBI" id="CHEBI:57540"/>
    </ligand>
</feature>
<feature type="binding site" evidence="1">
    <location>
        <begin position="152"/>
        <end position="155"/>
    </location>
    <ligand>
        <name>substrate</name>
    </ligand>
</feature>
<feature type="binding site" evidence="1">
    <location>
        <position position="157"/>
    </location>
    <ligand>
        <name>beta-D-fructose 1,6-bisphosphate</name>
        <dbReference type="ChEBI" id="CHEBI:32966"/>
        <note>allosteric activator</note>
    </ligand>
</feature>
<feature type="binding site" evidence="1">
    <location>
        <position position="172"/>
    </location>
    <ligand>
        <name>beta-D-fructose 1,6-bisphosphate</name>
        <dbReference type="ChEBI" id="CHEBI:32966"/>
        <note>allosteric activator</note>
    </ligand>
</feature>
<feature type="binding site" evidence="1">
    <location>
        <position position="233"/>
    </location>
    <ligand>
        <name>substrate</name>
    </ligand>
</feature>
<feature type="modified residue" description="Phosphotyrosine" evidence="1">
    <location>
        <position position="224"/>
    </location>
</feature>
<name>LDH_BACVZ</name>
<organism>
    <name type="scientific">Bacillus velezensis (strain DSM 23117 / BGSC 10A6 / LMG 26770 / FZB42)</name>
    <name type="common">Bacillus amyloliquefaciens subsp. plantarum</name>
    <dbReference type="NCBI Taxonomy" id="326423"/>
    <lineage>
        <taxon>Bacteria</taxon>
        <taxon>Bacillati</taxon>
        <taxon>Bacillota</taxon>
        <taxon>Bacilli</taxon>
        <taxon>Bacillales</taxon>
        <taxon>Bacillaceae</taxon>
        <taxon>Bacillus</taxon>
        <taxon>Bacillus amyloliquefaciens group</taxon>
    </lineage>
</organism>